<dbReference type="EMBL" id="AE017194">
    <property type="protein sequence ID" value="AAS43296.1"/>
    <property type="molecule type" value="Genomic_DNA"/>
</dbReference>
<dbReference type="KEGG" id="bca:BCE_4395"/>
<dbReference type="HOGENOM" id="CLU_005965_2_4_9"/>
<dbReference type="Proteomes" id="UP000002527">
    <property type="component" value="Chromosome"/>
</dbReference>
<dbReference type="GO" id="GO:0005524">
    <property type="term" value="F:ATP binding"/>
    <property type="evidence" value="ECO:0007669"/>
    <property type="project" value="UniProtKB-UniRule"/>
</dbReference>
<dbReference type="GO" id="GO:0140662">
    <property type="term" value="F:ATP-dependent protein folding chaperone"/>
    <property type="evidence" value="ECO:0007669"/>
    <property type="project" value="InterPro"/>
</dbReference>
<dbReference type="GO" id="GO:0051082">
    <property type="term" value="F:unfolded protein binding"/>
    <property type="evidence" value="ECO:0007669"/>
    <property type="project" value="InterPro"/>
</dbReference>
<dbReference type="CDD" id="cd10234">
    <property type="entry name" value="ASKHA_NBD_HSP70_DnaK-like"/>
    <property type="match status" value="1"/>
</dbReference>
<dbReference type="FunFam" id="2.60.34.10:FF:000014">
    <property type="entry name" value="Chaperone protein DnaK HSP70"/>
    <property type="match status" value="1"/>
</dbReference>
<dbReference type="FunFam" id="1.20.1270.10:FF:000004">
    <property type="entry name" value="Molecular chaperone DnaK"/>
    <property type="match status" value="1"/>
</dbReference>
<dbReference type="FunFam" id="3.30.420.40:FF:000071">
    <property type="entry name" value="Molecular chaperone DnaK"/>
    <property type="match status" value="1"/>
</dbReference>
<dbReference type="FunFam" id="3.90.640.10:FF:000003">
    <property type="entry name" value="Molecular chaperone DnaK"/>
    <property type="match status" value="1"/>
</dbReference>
<dbReference type="Gene3D" id="1.20.1270.10">
    <property type="match status" value="1"/>
</dbReference>
<dbReference type="Gene3D" id="3.30.420.40">
    <property type="match status" value="2"/>
</dbReference>
<dbReference type="Gene3D" id="3.90.640.10">
    <property type="entry name" value="Actin, Chain A, domain 4"/>
    <property type="match status" value="1"/>
</dbReference>
<dbReference type="Gene3D" id="2.60.34.10">
    <property type="entry name" value="Substrate Binding Domain Of DNAk, Chain A, domain 1"/>
    <property type="match status" value="1"/>
</dbReference>
<dbReference type="HAMAP" id="MF_00332">
    <property type="entry name" value="DnaK"/>
    <property type="match status" value="1"/>
</dbReference>
<dbReference type="InterPro" id="IPR043129">
    <property type="entry name" value="ATPase_NBD"/>
</dbReference>
<dbReference type="InterPro" id="IPR012725">
    <property type="entry name" value="Chaperone_DnaK"/>
</dbReference>
<dbReference type="InterPro" id="IPR018181">
    <property type="entry name" value="Heat_shock_70_CS"/>
</dbReference>
<dbReference type="InterPro" id="IPR029048">
    <property type="entry name" value="HSP70_C_sf"/>
</dbReference>
<dbReference type="InterPro" id="IPR029047">
    <property type="entry name" value="HSP70_peptide-bd_sf"/>
</dbReference>
<dbReference type="InterPro" id="IPR013126">
    <property type="entry name" value="Hsp_70_fam"/>
</dbReference>
<dbReference type="NCBIfam" id="NF001413">
    <property type="entry name" value="PRK00290.1"/>
    <property type="match status" value="1"/>
</dbReference>
<dbReference type="NCBIfam" id="TIGR02350">
    <property type="entry name" value="prok_dnaK"/>
    <property type="match status" value="1"/>
</dbReference>
<dbReference type="PANTHER" id="PTHR19375">
    <property type="entry name" value="HEAT SHOCK PROTEIN 70KDA"/>
    <property type="match status" value="1"/>
</dbReference>
<dbReference type="Pfam" id="PF00012">
    <property type="entry name" value="HSP70"/>
    <property type="match status" value="1"/>
</dbReference>
<dbReference type="PRINTS" id="PR00301">
    <property type="entry name" value="HEATSHOCK70"/>
</dbReference>
<dbReference type="SUPFAM" id="SSF53067">
    <property type="entry name" value="Actin-like ATPase domain"/>
    <property type="match status" value="2"/>
</dbReference>
<dbReference type="SUPFAM" id="SSF100934">
    <property type="entry name" value="Heat shock protein 70kD (HSP70), C-terminal subdomain"/>
    <property type="match status" value="1"/>
</dbReference>
<dbReference type="SUPFAM" id="SSF100920">
    <property type="entry name" value="Heat shock protein 70kD (HSP70), peptide-binding domain"/>
    <property type="match status" value="1"/>
</dbReference>
<dbReference type="PROSITE" id="PS00297">
    <property type="entry name" value="HSP70_1"/>
    <property type="match status" value="1"/>
</dbReference>
<dbReference type="PROSITE" id="PS00329">
    <property type="entry name" value="HSP70_2"/>
    <property type="match status" value="1"/>
</dbReference>
<dbReference type="PROSITE" id="PS01036">
    <property type="entry name" value="HSP70_3"/>
    <property type="match status" value="1"/>
</dbReference>
<comment type="function">
    <text evidence="1">Acts as a chaperone.</text>
</comment>
<comment type="induction">
    <text evidence="1">By stress conditions e.g. heat shock.</text>
</comment>
<comment type="similarity">
    <text evidence="1">Belongs to the heat shock protein 70 family.</text>
</comment>
<gene>
    <name evidence="1" type="primary">dnaK</name>
    <name type="ordered locus">BCE_4395</name>
</gene>
<keyword id="KW-0067">ATP-binding</keyword>
<keyword id="KW-0143">Chaperone</keyword>
<keyword id="KW-0547">Nucleotide-binding</keyword>
<keyword id="KW-0597">Phosphoprotein</keyword>
<keyword id="KW-0346">Stress response</keyword>
<accession>Q730M1</accession>
<evidence type="ECO:0000255" key="1">
    <source>
        <dbReference type="HAMAP-Rule" id="MF_00332"/>
    </source>
</evidence>
<evidence type="ECO:0000256" key="2">
    <source>
        <dbReference type="SAM" id="MobiDB-lite"/>
    </source>
</evidence>
<proteinExistence type="inferred from homology"/>
<name>DNAK_BACC1</name>
<feature type="chain" id="PRO_0000225931" description="Chaperone protein DnaK">
    <location>
        <begin position="1"/>
        <end position="611"/>
    </location>
</feature>
<feature type="region of interest" description="Disordered" evidence="2">
    <location>
        <begin position="579"/>
        <end position="598"/>
    </location>
</feature>
<feature type="compositionally biased region" description="Low complexity" evidence="2">
    <location>
        <begin position="579"/>
        <end position="592"/>
    </location>
</feature>
<feature type="modified residue" description="Phosphothreonine; by autocatalysis" evidence="1">
    <location>
        <position position="173"/>
    </location>
</feature>
<protein>
    <recommendedName>
        <fullName evidence="1">Chaperone protein DnaK</fullName>
    </recommendedName>
    <alternativeName>
        <fullName evidence="1">HSP70</fullName>
    </alternativeName>
    <alternativeName>
        <fullName evidence="1">Heat shock 70 kDa protein</fullName>
    </alternativeName>
    <alternativeName>
        <fullName evidence="1">Heat shock protein 70</fullName>
    </alternativeName>
</protein>
<reference key="1">
    <citation type="journal article" date="2004" name="Nucleic Acids Res.">
        <title>The genome sequence of Bacillus cereus ATCC 10987 reveals metabolic adaptations and a large plasmid related to Bacillus anthracis pXO1.</title>
        <authorList>
            <person name="Rasko D.A."/>
            <person name="Ravel J."/>
            <person name="Oekstad O.A."/>
            <person name="Helgason E."/>
            <person name="Cer R.Z."/>
            <person name="Jiang L."/>
            <person name="Shores K.A."/>
            <person name="Fouts D.E."/>
            <person name="Tourasse N.J."/>
            <person name="Angiuoli S.V."/>
            <person name="Kolonay J.F."/>
            <person name="Nelson W.C."/>
            <person name="Kolstoe A.-B."/>
            <person name="Fraser C.M."/>
            <person name="Read T.D."/>
        </authorList>
    </citation>
    <scope>NUCLEOTIDE SEQUENCE [LARGE SCALE GENOMIC DNA]</scope>
    <source>
        <strain>ATCC 10987 / NRS 248</strain>
    </source>
</reference>
<sequence length="611" mass="65875">MSKIIGIDLGTTNSCVAVMEGGEPKVIPNPEGNRTTPSVVAFKNEERQVGEVAKRQAITNPNTIMSVKRHMGTDYKVEIEGKEYTPQEISAIILQNLKASAEAYLGETVTKAVITVPAYFNDAERQATKDAGRIAGLEVERIINEPTAAALAYGLEKQDEEQKILVYDLGGGTFDVSILELADGTFEVISTAGDNRLGGDDFDQVIIDHLVAEFKKENNIDLSQDKMALQRLKDAAEKAKKDLSGVTQTQISLPFISAGAAXPLHLELTLTRAKFEELSANLVERTLEPTRRALKDAGLSASELDRVILVGGSTRIPAVQEAIKRETGKEPYKGVNPDEVVALGAAVQGGVLTGDVEGVLLLDVTPLSLGIETMGGVFTKLIERNTTIPTSKSQVFSTAADNQPAVDIHVLQGERPMSADNKTLGRFQLTDIPPAPRGIPQIEVTFDIDANGIVNVRAKDLGTSKEQAITIQSSSGLSDEEVDRMVKEAEANADADQKRKEEVELRNEADQLVFQTDKVVKDLEGKVDAAEVAKATEAKEALQAAIEKNELEEIRAKKDALQEIVQQLTVKLYEQAQAAAGQAEGAQGAQDAGAKKDNVVDAEFEEVKEDK</sequence>
<organism>
    <name type="scientific">Bacillus cereus (strain ATCC 10987 / NRS 248)</name>
    <dbReference type="NCBI Taxonomy" id="222523"/>
    <lineage>
        <taxon>Bacteria</taxon>
        <taxon>Bacillati</taxon>
        <taxon>Bacillota</taxon>
        <taxon>Bacilli</taxon>
        <taxon>Bacillales</taxon>
        <taxon>Bacillaceae</taxon>
        <taxon>Bacillus</taxon>
        <taxon>Bacillus cereus group</taxon>
    </lineage>
</organism>